<keyword id="KW-0067">ATP-binding</keyword>
<keyword id="KW-0418">Kinase</keyword>
<keyword id="KW-0547">Nucleotide-binding</keyword>
<keyword id="KW-0808">Transferase</keyword>
<proteinExistence type="inferred from homology"/>
<accession>B0XPE4</accession>
<sequence>MSSSPVPLLRPPVPGNRGNGPRPPKLTLGIPPSPNSRPVDGNGVGPAAAAPEAPQPQRPSTRPAPPQLRLATPMGSSSDVPQEVPRLANGRPAPPPLATTGLNESTGHSRSSSFTYLDGKASGPASASSSNYSALSFAMGLRQPHGSTPDPSSAISSVYSDREGGVQMERDNSVNGLLPDLDKLSLEKGRPLDVDDLDDEGWLAASEQKKIIELGSLGEGAGGAVTRCKLKDGKTVFALKIITTDPNPDVKKQIVRELNFNKDCASEHICRYYGAFMDKSTGTISIAMEFCEGGSLDSIYKEVKKLGGRTGEKVLGKIAEGVLNGLTYLHSRKIIHRDIKPSNILLCRNGQVKLCDFGVSGEFGTKGDANTFIGTSYYMAPERITGQSYTITSDVWSLGVTLLEVAQHRFPFPADGTEMQPRAGLIDLLTYIVRQPIPKLKDEPENRIRWSDNFKYFIECCLEKEPPRRATPWRMLEHPWMLDMKNKKVNMANFVRQVWGWQD</sequence>
<feature type="chain" id="PRO_0000454885" description="Mitogen-activated protein kinase kinae mkk2">
    <location>
        <begin position="1"/>
        <end position="503"/>
    </location>
</feature>
<feature type="domain" description="Protein kinase" evidence="1">
    <location>
        <begin position="211"/>
        <end position="481"/>
    </location>
</feature>
<feature type="region of interest" description="Disordered" evidence="3">
    <location>
        <begin position="1"/>
        <end position="130"/>
    </location>
</feature>
<feature type="compositionally biased region" description="Pro residues" evidence="3">
    <location>
        <begin position="53"/>
        <end position="66"/>
    </location>
</feature>
<feature type="compositionally biased region" description="Polar residues" evidence="3">
    <location>
        <begin position="100"/>
        <end position="115"/>
    </location>
</feature>
<feature type="compositionally biased region" description="Low complexity" evidence="3">
    <location>
        <begin position="121"/>
        <end position="130"/>
    </location>
</feature>
<feature type="active site" description="Proton acceptor" evidence="2">
    <location>
        <position position="338"/>
    </location>
</feature>
<feature type="binding site" evidence="1">
    <location>
        <begin position="217"/>
        <end position="225"/>
    </location>
    <ligand>
        <name>ATP</name>
        <dbReference type="ChEBI" id="CHEBI:30616"/>
    </ligand>
</feature>
<feature type="binding site" evidence="1">
    <location>
        <position position="240"/>
    </location>
    <ligand>
        <name>ATP</name>
        <dbReference type="ChEBI" id="CHEBI:30616"/>
    </ligand>
</feature>
<gene>
    <name evidence="5" type="primary">mkk2</name>
    <name type="ORF">AFUB_006190</name>
</gene>
<dbReference type="EC" id="2.7.11.24" evidence="7"/>
<dbReference type="EMBL" id="DS499594">
    <property type="protein sequence ID" value="EDP55917.1"/>
    <property type="molecule type" value="Genomic_DNA"/>
</dbReference>
<dbReference type="SMR" id="B0XPE4"/>
<dbReference type="EnsemblFungi" id="EDP55917">
    <property type="protein sequence ID" value="EDP55917"/>
    <property type="gene ID" value="AFUB_006190"/>
</dbReference>
<dbReference type="VEuPathDB" id="FungiDB:AFUB_006190"/>
<dbReference type="HOGENOM" id="CLU_000288_63_23_1"/>
<dbReference type="OrthoDB" id="86398at5052"/>
<dbReference type="PhylomeDB" id="B0XPE4"/>
<dbReference type="Proteomes" id="UP000001699">
    <property type="component" value="Unassembled WGS sequence"/>
</dbReference>
<dbReference type="GO" id="GO:0005737">
    <property type="term" value="C:cytoplasm"/>
    <property type="evidence" value="ECO:0007669"/>
    <property type="project" value="EnsemblFungi"/>
</dbReference>
<dbReference type="GO" id="GO:0000935">
    <property type="term" value="C:division septum"/>
    <property type="evidence" value="ECO:0007669"/>
    <property type="project" value="EnsemblFungi"/>
</dbReference>
<dbReference type="GO" id="GO:0005524">
    <property type="term" value="F:ATP binding"/>
    <property type="evidence" value="ECO:0007669"/>
    <property type="project" value="UniProtKB-KW"/>
</dbReference>
<dbReference type="GO" id="GO:0004708">
    <property type="term" value="F:MAP kinase kinase activity"/>
    <property type="evidence" value="ECO:0007669"/>
    <property type="project" value="EnsemblFungi"/>
</dbReference>
<dbReference type="GO" id="GO:0000196">
    <property type="term" value="P:cell integrity MAPK cascade"/>
    <property type="evidence" value="ECO:0007669"/>
    <property type="project" value="EnsemblFungi"/>
</dbReference>
<dbReference type="GO" id="GO:0050850">
    <property type="term" value="P:positive regulation of calcium-mediated signaling"/>
    <property type="evidence" value="ECO:0007669"/>
    <property type="project" value="EnsemblFungi"/>
</dbReference>
<dbReference type="CDD" id="cd06621">
    <property type="entry name" value="PKc_Pek1_like"/>
    <property type="match status" value="1"/>
</dbReference>
<dbReference type="FunFam" id="3.30.200.20:FF:000294">
    <property type="entry name" value="Map kinase kinase"/>
    <property type="match status" value="1"/>
</dbReference>
<dbReference type="FunFam" id="1.10.510.10:FF:000263">
    <property type="entry name" value="MAP kinase skh1/pek1"/>
    <property type="match status" value="1"/>
</dbReference>
<dbReference type="Gene3D" id="3.30.200.20">
    <property type="entry name" value="Phosphorylase Kinase, domain 1"/>
    <property type="match status" value="1"/>
</dbReference>
<dbReference type="Gene3D" id="1.10.510.10">
    <property type="entry name" value="Transferase(Phosphotransferase) domain 1"/>
    <property type="match status" value="1"/>
</dbReference>
<dbReference type="InterPro" id="IPR011009">
    <property type="entry name" value="Kinase-like_dom_sf"/>
</dbReference>
<dbReference type="InterPro" id="IPR050915">
    <property type="entry name" value="MAP_kinase_kinase"/>
</dbReference>
<dbReference type="InterPro" id="IPR000719">
    <property type="entry name" value="Prot_kinase_dom"/>
</dbReference>
<dbReference type="InterPro" id="IPR017441">
    <property type="entry name" value="Protein_kinase_ATP_BS"/>
</dbReference>
<dbReference type="InterPro" id="IPR008271">
    <property type="entry name" value="Ser/Thr_kinase_AS"/>
</dbReference>
<dbReference type="PANTHER" id="PTHR47448">
    <property type="entry name" value="DUAL SPECIFICITY MITOGEN-ACTIVATED PROTEIN KINASE KINASE DSOR1-LIKE PROTEIN"/>
    <property type="match status" value="1"/>
</dbReference>
<dbReference type="PANTHER" id="PTHR47448:SF5">
    <property type="entry name" value="MITOGEN-ACTIVATED PROTEIN KINASE KINAE MKK2"/>
    <property type="match status" value="1"/>
</dbReference>
<dbReference type="Pfam" id="PF00069">
    <property type="entry name" value="Pkinase"/>
    <property type="match status" value="1"/>
</dbReference>
<dbReference type="SMART" id="SM00220">
    <property type="entry name" value="S_TKc"/>
    <property type="match status" value="1"/>
</dbReference>
<dbReference type="SUPFAM" id="SSF56112">
    <property type="entry name" value="Protein kinase-like (PK-like)"/>
    <property type="match status" value="1"/>
</dbReference>
<dbReference type="PROSITE" id="PS00107">
    <property type="entry name" value="PROTEIN_KINASE_ATP"/>
    <property type="match status" value="1"/>
</dbReference>
<dbReference type="PROSITE" id="PS50011">
    <property type="entry name" value="PROTEIN_KINASE_DOM"/>
    <property type="match status" value="1"/>
</dbReference>
<dbReference type="PROSITE" id="PS00108">
    <property type="entry name" value="PROTEIN_KINASE_ST"/>
    <property type="match status" value="1"/>
</dbReference>
<comment type="function">
    <text evidence="4">Mitogen-activated kinase kinase (MAPKK), part of the cell wall integrity (CWI) signaling pathway composed by three protein kinases bck1, mkk2 and mpkA and responsible for the maintaining of cell-wall integrity balance (PubMed:19715768). The CWI pathway also regulates the oxidative stress response, as well as the production of some secondary metabolites including pyomelanin (PubMed:19715768).</text>
</comment>
<comment type="catalytic activity">
    <reaction evidence="7">
        <text>L-seryl-[protein] + ATP = O-phospho-L-seryl-[protein] + ADP + H(+)</text>
        <dbReference type="Rhea" id="RHEA:17989"/>
        <dbReference type="Rhea" id="RHEA-COMP:9863"/>
        <dbReference type="Rhea" id="RHEA-COMP:11604"/>
        <dbReference type="ChEBI" id="CHEBI:15378"/>
        <dbReference type="ChEBI" id="CHEBI:29999"/>
        <dbReference type="ChEBI" id="CHEBI:30616"/>
        <dbReference type="ChEBI" id="CHEBI:83421"/>
        <dbReference type="ChEBI" id="CHEBI:456216"/>
        <dbReference type="EC" id="2.7.11.24"/>
    </reaction>
    <physiologicalReaction direction="left-to-right" evidence="7">
        <dbReference type="Rhea" id="RHEA:17990"/>
    </physiologicalReaction>
</comment>
<comment type="catalytic activity">
    <reaction evidence="7">
        <text>L-threonyl-[protein] + ATP = O-phospho-L-threonyl-[protein] + ADP + H(+)</text>
        <dbReference type="Rhea" id="RHEA:46608"/>
        <dbReference type="Rhea" id="RHEA-COMP:11060"/>
        <dbReference type="Rhea" id="RHEA-COMP:11605"/>
        <dbReference type="ChEBI" id="CHEBI:15378"/>
        <dbReference type="ChEBI" id="CHEBI:30013"/>
        <dbReference type="ChEBI" id="CHEBI:30616"/>
        <dbReference type="ChEBI" id="CHEBI:61977"/>
        <dbReference type="ChEBI" id="CHEBI:456216"/>
        <dbReference type="EC" id="2.7.11.24"/>
    </reaction>
    <physiologicalReaction direction="left-to-right" evidence="7">
        <dbReference type="Rhea" id="RHEA:46609"/>
    </physiologicalReaction>
</comment>
<comment type="disruption phenotype">
    <text evidence="4">Leads to the formation of thicker hyphae, which appear less elongated and form more branched hyphae (PubMed:19715768). Results in increased sensitivity to cell wall integrity inhibitors such as glucanex, SDS, congo red and calcofluor white (PubMed:19715768). Impairs phosphorylation of the MAPK mpkA (PubMed:19715768).</text>
</comment>
<comment type="similarity">
    <text evidence="6">Belongs to the protein kinase superfamily. STE Ser/Thr protein kinase family. MAP kinase kinase subfamily.</text>
</comment>
<name>MKK2_ASPFC</name>
<organism>
    <name type="scientific">Aspergillus fumigatus (strain CBS 144.89 / FGSC A1163 / CEA10)</name>
    <name type="common">Neosartorya fumigata</name>
    <dbReference type="NCBI Taxonomy" id="451804"/>
    <lineage>
        <taxon>Eukaryota</taxon>
        <taxon>Fungi</taxon>
        <taxon>Dikarya</taxon>
        <taxon>Ascomycota</taxon>
        <taxon>Pezizomycotina</taxon>
        <taxon>Eurotiomycetes</taxon>
        <taxon>Eurotiomycetidae</taxon>
        <taxon>Eurotiales</taxon>
        <taxon>Aspergillaceae</taxon>
        <taxon>Aspergillus</taxon>
        <taxon>Aspergillus subgen. Fumigati</taxon>
    </lineage>
</organism>
<protein>
    <recommendedName>
        <fullName evidence="5">Mitogen-activated protein kinase kinae mkk2</fullName>
        <shortName evidence="5">MAPKK mkk2</shortName>
        <ecNumber evidence="7">2.7.11.24</ecNumber>
    </recommendedName>
</protein>
<reference key="1">
    <citation type="journal article" date="2008" name="PLoS Genet.">
        <title>Genomic islands in the pathogenic filamentous fungus Aspergillus fumigatus.</title>
        <authorList>
            <person name="Fedorova N.D."/>
            <person name="Khaldi N."/>
            <person name="Joardar V.S."/>
            <person name="Maiti R."/>
            <person name="Amedeo P."/>
            <person name="Anderson M.J."/>
            <person name="Crabtree J."/>
            <person name="Silva J.C."/>
            <person name="Badger J.H."/>
            <person name="Albarraq A."/>
            <person name="Angiuoli S."/>
            <person name="Bussey H."/>
            <person name="Bowyer P."/>
            <person name="Cotty P.J."/>
            <person name="Dyer P.S."/>
            <person name="Egan A."/>
            <person name="Galens K."/>
            <person name="Fraser-Liggett C.M."/>
            <person name="Haas B.J."/>
            <person name="Inman J.M."/>
            <person name="Kent R."/>
            <person name="Lemieux S."/>
            <person name="Malavazi I."/>
            <person name="Orvis J."/>
            <person name="Roemer T."/>
            <person name="Ronning C.M."/>
            <person name="Sundaram J.P."/>
            <person name="Sutton G."/>
            <person name="Turner G."/>
            <person name="Venter J.C."/>
            <person name="White O.R."/>
            <person name="Whitty B.R."/>
            <person name="Youngman P."/>
            <person name="Wolfe K.H."/>
            <person name="Goldman G.H."/>
            <person name="Wortman J.R."/>
            <person name="Jiang B."/>
            <person name="Denning D.W."/>
            <person name="Nierman W.C."/>
        </authorList>
    </citation>
    <scope>NUCLEOTIDE SEQUENCE [LARGE SCALE GENOMIC DNA]</scope>
    <source>
        <strain>CBS 144.89 / FGSC A1163 / CEA10</strain>
    </source>
</reference>
<reference key="2">
    <citation type="journal article" date="2009" name="Fungal Genet. Biol.">
        <title>The MpkA MAP kinase module regulates cell wall integrity signaling and pyomelanin formation in Aspergillus fumigatus.</title>
        <authorList>
            <person name="Valiante V."/>
            <person name="Jain R."/>
            <person name="Heinekamp T."/>
            <person name="Brakhage A.A."/>
        </authorList>
    </citation>
    <scope>FUNCTION</scope>
    <scope>DISRUPTION PHENOTYPE</scope>
</reference>
<evidence type="ECO:0000255" key="1">
    <source>
        <dbReference type="PROSITE-ProRule" id="PRU00159"/>
    </source>
</evidence>
<evidence type="ECO:0000255" key="2">
    <source>
        <dbReference type="PROSITE-ProRule" id="PRU10027"/>
    </source>
</evidence>
<evidence type="ECO:0000256" key="3">
    <source>
        <dbReference type="SAM" id="MobiDB-lite"/>
    </source>
</evidence>
<evidence type="ECO:0000269" key="4">
    <source>
    </source>
</evidence>
<evidence type="ECO:0000303" key="5">
    <source>
    </source>
</evidence>
<evidence type="ECO:0000305" key="6"/>
<evidence type="ECO:0000305" key="7">
    <source>
    </source>
</evidence>